<evidence type="ECO:0000250" key="1"/>
<evidence type="ECO:0000255" key="2"/>
<evidence type="ECO:0000305" key="3"/>
<comment type="function">
    <text evidence="1">Core subunit of the mitochondrial membrane respiratory chain NADH dehydrogenase (Complex I) that is believed to belong to the minimal assembly required for catalysis. Complex I functions in the transfer of electrons from NADH to the respiratory chain. The immediate electron acceptor for the enzyme is believed to be ubiquinone (By similarity).</text>
</comment>
<comment type="catalytic activity">
    <reaction>
        <text>a ubiquinone + NADH + 5 H(+)(in) = a ubiquinol + NAD(+) + 4 H(+)(out)</text>
        <dbReference type="Rhea" id="RHEA:29091"/>
        <dbReference type="Rhea" id="RHEA-COMP:9565"/>
        <dbReference type="Rhea" id="RHEA-COMP:9566"/>
        <dbReference type="ChEBI" id="CHEBI:15378"/>
        <dbReference type="ChEBI" id="CHEBI:16389"/>
        <dbReference type="ChEBI" id="CHEBI:17976"/>
        <dbReference type="ChEBI" id="CHEBI:57540"/>
        <dbReference type="ChEBI" id="CHEBI:57945"/>
        <dbReference type="EC" id="7.1.1.2"/>
    </reaction>
</comment>
<comment type="subcellular location">
    <subcellularLocation>
        <location evidence="1">Mitochondrion inner membrane</location>
        <topology evidence="1">Multi-pass membrane protein</topology>
    </subcellularLocation>
</comment>
<comment type="similarity">
    <text evidence="3">Belongs to the complex I subunit 1 family.</text>
</comment>
<organism>
    <name type="scientific">Nyctalus noctula</name>
    <name type="common">Noctule bat</name>
    <dbReference type="NCBI Taxonomy" id="51300"/>
    <lineage>
        <taxon>Eukaryota</taxon>
        <taxon>Metazoa</taxon>
        <taxon>Chordata</taxon>
        <taxon>Craniata</taxon>
        <taxon>Vertebrata</taxon>
        <taxon>Euteleostomi</taxon>
        <taxon>Mammalia</taxon>
        <taxon>Eutheria</taxon>
        <taxon>Laurasiatheria</taxon>
        <taxon>Chiroptera</taxon>
        <taxon>Yangochiroptera</taxon>
        <taxon>Vespertilionidae</taxon>
        <taxon>Nyctalus</taxon>
    </lineage>
</organism>
<geneLocation type="mitochondrion"/>
<proteinExistence type="inferred from homology"/>
<reference key="1">
    <citation type="submission" date="1998-05" db="EMBL/GenBank/DDBJ databases">
        <title>No evidence of bottlenecks in the post-glacial recolonization of Europe by the noctule bat (Nyctalus noctula).</title>
        <authorList>
            <person name="Petit E."/>
            <person name="Excoffier L."/>
            <person name="Mayer F."/>
        </authorList>
    </citation>
    <scope>NUCLEOTIDE SEQUENCE [GENOMIC DNA]</scope>
</reference>
<feature type="chain" id="PRO_0000117439" description="NADH-ubiquinone oxidoreductase chain 1">
    <location>
        <begin position="1" status="less than"/>
        <end position="301" status="greater than"/>
    </location>
</feature>
<feature type="transmembrane region" description="Helical" evidence="2">
    <location>
        <begin position="4"/>
        <end position="24"/>
    </location>
</feature>
<feature type="transmembrane region" description="Helical" evidence="2">
    <location>
        <begin position="62"/>
        <end position="82"/>
    </location>
</feature>
<feature type="transmembrane region" description="Helical" evidence="2">
    <location>
        <begin position="96"/>
        <end position="116"/>
    </location>
</feature>
<feature type="transmembrane region" description="Helical" evidence="2">
    <location>
        <begin position="140"/>
        <end position="160"/>
    </location>
</feature>
<feature type="transmembrane region" description="Helical" evidence="2">
    <location>
        <begin position="165"/>
        <end position="185"/>
    </location>
</feature>
<feature type="transmembrane region" description="Helical" evidence="2">
    <location>
        <begin position="216"/>
        <end position="236"/>
    </location>
</feature>
<feature type="transmembrane region" description="Helical" evidence="2">
    <location>
        <begin position="247"/>
        <end position="267"/>
    </location>
</feature>
<feature type="transmembrane region" description="Helical" evidence="2">
    <location>
        <begin position="279"/>
        <end position="299"/>
    </location>
</feature>
<feature type="non-terminal residue">
    <location>
        <position position="1"/>
    </location>
</feature>
<feature type="non-terminal residue">
    <location>
        <position position="301"/>
    </location>
</feature>
<accession>O80003</accession>
<dbReference type="EC" id="7.1.1.2"/>
<dbReference type="EMBL" id="AF065104">
    <property type="protein sequence ID" value="AAC28345.1"/>
    <property type="molecule type" value="Genomic_DNA"/>
</dbReference>
<dbReference type="EMBL" id="AF065108">
    <property type="protein sequence ID" value="AAC28349.1"/>
    <property type="molecule type" value="Genomic_DNA"/>
</dbReference>
<dbReference type="EMBL" id="AF065109">
    <property type="protein sequence ID" value="AAC28350.1"/>
    <property type="molecule type" value="Genomic_DNA"/>
</dbReference>
<dbReference type="SMR" id="O80003"/>
<dbReference type="GO" id="GO:0005743">
    <property type="term" value="C:mitochondrial inner membrane"/>
    <property type="evidence" value="ECO:0007669"/>
    <property type="project" value="UniProtKB-SubCell"/>
</dbReference>
<dbReference type="GO" id="GO:0008137">
    <property type="term" value="F:NADH dehydrogenase (ubiquinone) activity"/>
    <property type="evidence" value="ECO:0007669"/>
    <property type="project" value="UniProtKB-EC"/>
</dbReference>
<dbReference type="GO" id="GO:0009060">
    <property type="term" value="P:aerobic respiration"/>
    <property type="evidence" value="ECO:0007669"/>
    <property type="project" value="TreeGrafter"/>
</dbReference>
<dbReference type="HAMAP" id="MF_01350">
    <property type="entry name" value="NDH1_NuoH"/>
    <property type="match status" value="1"/>
</dbReference>
<dbReference type="InterPro" id="IPR001694">
    <property type="entry name" value="NADH_UbQ_OxRdtase_su1/FPO"/>
</dbReference>
<dbReference type="InterPro" id="IPR018086">
    <property type="entry name" value="NADH_UbQ_OxRdtase_su1_CS"/>
</dbReference>
<dbReference type="PANTHER" id="PTHR11432">
    <property type="entry name" value="NADH DEHYDROGENASE SUBUNIT 1"/>
    <property type="match status" value="1"/>
</dbReference>
<dbReference type="PANTHER" id="PTHR11432:SF3">
    <property type="entry name" value="NADH-UBIQUINONE OXIDOREDUCTASE CHAIN 1"/>
    <property type="match status" value="1"/>
</dbReference>
<dbReference type="Pfam" id="PF00146">
    <property type="entry name" value="NADHdh"/>
    <property type="match status" value="1"/>
</dbReference>
<dbReference type="PROSITE" id="PS00667">
    <property type="entry name" value="COMPLEX1_ND1_1"/>
    <property type="match status" value="1"/>
</dbReference>
<dbReference type="PROSITE" id="PS00668">
    <property type="entry name" value="COMPLEX1_ND1_2"/>
    <property type="match status" value="1"/>
</dbReference>
<name>NU1M_NYCNO</name>
<gene>
    <name type="primary">MT-ND1</name>
    <name type="synonym">MTND1</name>
    <name type="synonym">NADH1</name>
    <name type="synonym">ND1</name>
</gene>
<sequence length="301" mass="33958">LTTIIPILLAVAFLTLLERKVLGYMQLRKGPNIVGPYGLLQPIADAVKLFIKEPLQPLTSSLALFIIAPTLALTLALMMWIPLPMPHPLINMNLSILFMLALSSLAVYAILWSGWASNSKYALIGALRAVAQTISYEVTLAIIILSILLMNGSFTLSTLITTQEYTWLIMPSWPLAMMWFISTIAETNRAPFDLTEGESELVSGFNVEYAGGPFALFFLAEYANIIMMNALTIILFLGAYNNSTFPEMYTANFMLKALLFTTFFLWIRASYPRFRYDQLMHLLWKNFLPLTLVMCMWHVTL</sequence>
<protein>
    <recommendedName>
        <fullName>NADH-ubiquinone oxidoreductase chain 1</fullName>
        <ecNumber>7.1.1.2</ecNumber>
    </recommendedName>
    <alternativeName>
        <fullName>NADH dehydrogenase subunit 1</fullName>
    </alternativeName>
</protein>
<keyword id="KW-0249">Electron transport</keyword>
<keyword id="KW-0472">Membrane</keyword>
<keyword id="KW-0496">Mitochondrion</keyword>
<keyword id="KW-0999">Mitochondrion inner membrane</keyword>
<keyword id="KW-0520">NAD</keyword>
<keyword id="KW-0679">Respiratory chain</keyword>
<keyword id="KW-1278">Translocase</keyword>
<keyword id="KW-0812">Transmembrane</keyword>
<keyword id="KW-1133">Transmembrane helix</keyword>
<keyword id="KW-0813">Transport</keyword>
<keyword id="KW-0830">Ubiquinone</keyword>